<proteinExistence type="inferred from homology"/>
<evidence type="ECO:0000255" key="1">
    <source>
        <dbReference type="HAMAP-Rule" id="MF_00009"/>
    </source>
</evidence>
<feature type="chain" id="PRO_0000284250" description="Endoribonuclease YbeY">
    <location>
        <begin position="1"/>
        <end position="150"/>
    </location>
</feature>
<feature type="binding site" evidence="1">
    <location>
        <position position="116"/>
    </location>
    <ligand>
        <name>Zn(2+)</name>
        <dbReference type="ChEBI" id="CHEBI:29105"/>
        <note>catalytic</note>
    </ligand>
</feature>
<feature type="binding site" evidence="1">
    <location>
        <position position="120"/>
    </location>
    <ligand>
        <name>Zn(2+)</name>
        <dbReference type="ChEBI" id="CHEBI:29105"/>
        <note>catalytic</note>
    </ligand>
</feature>
<feature type="binding site" evidence="1">
    <location>
        <position position="126"/>
    </location>
    <ligand>
        <name>Zn(2+)</name>
        <dbReference type="ChEBI" id="CHEBI:29105"/>
        <note>catalytic</note>
    </ligand>
</feature>
<organism>
    <name type="scientific">Mesomycoplasma hyopneumoniae (strain J / ATCC 25934 / NCTC 10110)</name>
    <name type="common">Mycoplasma hyopneumoniae</name>
    <dbReference type="NCBI Taxonomy" id="262719"/>
    <lineage>
        <taxon>Bacteria</taxon>
        <taxon>Bacillati</taxon>
        <taxon>Mycoplasmatota</taxon>
        <taxon>Mycoplasmoidales</taxon>
        <taxon>Metamycoplasmataceae</taxon>
        <taxon>Mesomycoplasma</taxon>
    </lineage>
</organism>
<dbReference type="EC" id="3.1.-.-" evidence="1"/>
<dbReference type="EMBL" id="AE017243">
    <property type="protein sequence ID" value="AAZ44245.1"/>
    <property type="molecule type" value="Genomic_DNA"/>
</dbReference>
<dbReference type="RefSeq" id="WP_011206061.1">
    <property type="nucleotide sequence ID" value="NC_007295.1"/>
</dbReference>
<dbReference type="SMR" id="Q4AAH6"/>
<dbReference type="GeneID" id="41334456"/>
<dbReference type="KEGG" id="mhj:MHJ_0154"/>
<dbReference type="eggNOG" id="COG0319">
    <property type="taxonomic scope" value="Bacteria"/>
</dbReference>
<dbReference type="HOGENOM" id="CLU_106710_3_0_14"/>
<dbReference type="OrthoDB" id="9807740at2"/>
<dbReference type="Proteomes" id="UP000000548">
    <property type="component" value="Chromosome"/>
</dbReference>
<dbReference type="GO" id="GO:0005737">
    <property type="term" value="C:cytoplasm"/>
    <property type="evidence" value="ECO:0007669"/>
    <property type="project" value="UniProtKB-SubCell"/>
</dbReference>
<dbReference type="GO" id="GO:0004222">
    <property type="term" value="F:metalloendopeptidase activity"/>
    <property type="evidence" value="ECO:0007669"/>
    <property type="project" value="InterPro"/>
</dbReference>
<dbReference type="GO" id="GO:0004521">
    <property type="term" value="F:RNA endonuclease activity"/>
    <property type="evidence" value="ECO:0007669"/>
    <property type="project" value="UniProtKB-UniRule"/>
</dbReference>
<dbReference type="GO" id="GO:0008270">
    <property type="term" value="F:zinc ion binding"/>
    <property type="evidence" value="ECO:0007669"/>
    <property type="project" value="UniProtKB-UniRule"/>
</dbReference>
<dbReference type="GO" id="GO:0006364">
    <property type="term" value="P:rRNA processing"/>
    <property type="evidence" value="ECO:0007669"/>
    <property type="project" value="UniProtKB-UniRule"/>
</dbReference>
<dbReference type="Gene3D" id="3.40.390.30">
    <property type="entry name" value="Metalloproteases ('zincins'), catalytic domain"/>
    <property type="match status" value="1"/>
</dbReference>
<dbReference type="HAMAP" id="MF_00009">
    <property type="entry name" value="Endoribonucl_YbeY"/>
    <property type="match status" value="1"/>
</dbReference>
<dbReference type="InterPro" id="IPR023091">
    <property type="entry name" value="MetalPrtase_cat_dom_sf_prd"/>
</dbReference>
<dbReference type="InterPro" id="IPR002036">
    <property type="entry name" value="YbeY"/>
</dbReference>
<dbReference type="InterPro" id="IPR020549">
    <property type="entry name" value="YbeY_CS"/>
</dbReference>
<dbReference type="NCBIfam" id="TIGR00043">
    <property type="entry name" value="rRNA maturation RNase YbeY"/>
    <property type="match status" value="1"/>
</dbReference>
<dbReference type="PANTHER" id="PTHR46986">
    <property type="entry name" value="ENDORIBONUCLEASE YBEY, CHLOROPLASTIC"/>
    <property type="match status" value="1"/>
</dbReference>
<dbReference type="PANTHER" id="PTHR46986:SF1">
    <property type="entry name" value="ENDORIBONUCLEASE YBEY, CHLOROPLASTIC"/>
    <property type="match status" value="1"/>
</dbReference>
<dbReference type="Pfam" id="PF02130">
    <property type="entry name" value="YbeY"/>
    <property type="match status" value="1"/>
</dbReference>
<dbReference type="SUPFAM" id="SSF55486">
    <property type="entry name" value="Metalloproteases ('zincins'), catalytic domain"/>
    <property type="match status" value="1"/>
</dbReference>
<dbReference type="PROSITE" id="PS01306">
    <property type="entry name" value="UPF0054"/>
    <property type="match status" value="1"/>
</dbReference>
<sequence>MKAKINFLNQSRIKFKYLKLFRKIFKLLVEKEQITGEISLDLMLITQRKAQKLAIKFKNINYIPDVLSFPSNLIIAKKNFRLHFLGEIFMTPAKIIKQANEYGHSEEREFSYLFVHSIYHLLGFDHQDEKTNKLMDEKVENILINLGINR</sequence>
<accession>Q4AAH6</accession>
<gene>
    <name evidence="1" type="primary">ybeY</name>
    <name type="ordered locus">MHJ_0154</name>
</gene>
<keyword id="KW-0963">Cytoplasm</keyword>
<keyword id="KW-0255">Endonuclease</keyword>
<keyword id="KW-0378">Hydrolase</keyword>
<keyword id="KW-0479">Metal-binding</keyword>
<keyword id="KW-0540">Nuclease</keyword>
<keyword id="KW-0690">Ribosome biogenesis</keyword>
<keyword id="KW-0698">rRNA processing</keyword>
<keyword id="KW-0862">Zinc</keyword>
<reference key="1">
    <citation type="journal article" date="2005" name="J. Bacteriol.">
        <title>Swine and poultry pathogens: the complete genome sequences of two strains of Mycoplasma hyopneumoniae and a strain of Mycoplasma synoviae.</title>
        <authorList>
            <person name="Vasconcelos A.T.R."/>
            <person name="Ferreira H.B."/>
            <person name="Bizarro C.V."/>
            <person name="Bonatto S.L."/>
            <person name="Carvalho M.O."/>
            <person name="Pinto P.M."/>
            <person name="Almeida D.F."/>
            <person name="Almeida L.G.P."/>
            <person name="Almeida R."/>
            <person name="Alves-Junior L."/>
            <person name="Assuncao E.N."/>
            <person name="Azevedo V.A.C."/>
            <person name="Bogo M.R."/>
            <person name="Brigido M.M."/>
            <person name="Brocchi M."/>
            <person name="Burity H.A."/>
            <person name="Camargo A.A."/>
            <person name="Camargo S.S."/>
            <person name="Carepo M.S."/>
            <person name="Carraro D.M."/>
            <person name="de Mattos Cascardo J.C."/>
            <person name="Castro L.A."/>
            <person name="Cavalcanti G."/>
            <person name="Chemale G."/>
            <person name="Collevatti R.G."/>
            <person name="Cunha C.W."/>
            <person name="Dallagiovanna B."/>
            <person name="Dambros B.P."/>
            <person name="Dellagostin O.A."/>
            <person name="Falcao C."/>
            <person name="Fantinatti-Garboggini F."/>
            <person name="Felipe M.S.S."/>
            <person name="Fiorentin L."/>
            <person name="Franco G.R."/>
            <person name="Freitas N.S.A."/>
            <person name="Frias D."/>
            <person name="Grangeiro T.B."/>
            <person name="Grisard E.C."/>
            <person name="Guimaraes C.T."/>
            <person name="Hungria M."/>
            <person name="Jardim S.N."/>
            <person name="Krieger M.A."/>
            <person name="Laurino J.P."/>
            <person name="Lima L.F.A."/>
            <person name="Lopes M.I."/>
            <person name="Loreto E.L.S."/>
            <person name="Madeira H.M.F."/>
            <person name="Manfio G.P."/>
            <person name="Maranhao A.Q."/>
            <person name="Martinkovics C.T."/>
            <person name="Medeiros S.R.B."/>
            <person name="Moreira M.A.M."/>
            <person name="Neiva M."/>
            <person name="Ramalho-Neto C.E."/>
            <person name="Nicolas M.F."/>
            <person name="Oliveira S.C."/>
            <person name="Paixao R.F.C."/>
            <person name="Pedrosa F.O."/>
            <person name="Pena S.D.J."/>
            <person name="Pereira M."/>
            <person name="Pereira-Ferrari L."/>
            <person name="Piffer I."/>
            <person name="Pinto L.S."/>
            <person name="Potrich D.P."/>
            <person name="Salim A.C.M."/>
            <person name="Santos F.R."/>
            <person name="Schmitt R."/>
            <person name="Schneider M.P.C."/>
            <person name="Schrank A."/>
            <person name="Schrank I.S."/>
            <person name="Schuck A.F."/>
            <person name="Seuanez H.N."/>
            <person name="Silva D.W."/>
            <person name="Silva R."/>
            <person name="Silva S.C."/>
            <person name="Soares C.M.A."/>
            <person name="Souza K.R.L."/>
            <person name="Souza R.C."/>
            <person name="Staats C.C."/>
            <person name="Steffens M.B.R."/>
            <person name="Teixeira S.M.R."/>
            <person name="Urmenyi T.P."/>
            <person name="Vainstein M.H."/>
            <person name="Zuccherato L.W."/>
            <person name="Simpson A.J.G."/>
            <person name="Zaha A."/>
        </authorList>
    </citation>
    <scope>NUCLEOTIDE SEQUENCE [LARGE SCALE GENOMIC DNA]</scope>
    <source>
        <strain>J / ATCC 25934 / NCTC 10110</strain>
    </source>
</reference>
<name>YBEY_MESHJ</name>
<protein>
    <recommendedName>
        <fullName evidence="1">Endoribonuclease YbeY</fullName>
        <ecNumber evidence="1">3.1.-.-</ecNumber>
    </recommendedName>
</protein>
<comment type="function">
    <text evidence="1">Single strand-specific metallo-endoribonuclease involved in late-stage 70S ribosome quality control and in maturation of the 3' terminus of the 16S rRNA.</text>
</comment>
<comment type="cofactor">
    <cofactor evidence="1">
        <name>Zn(2+)</name>
        <dbReference type="ChEBI" id="CHEBI:29105"/>
    </cofactor>
    <text evidence="1">Binds 1 zinc ion.</text>
</comment>
<comment type="subcellular location">
    <subcellularLocation>
        <location evidence="1">Cytoplasm</location>
    </subcellularLocation>
</comment>
<comment type="similarity">
    <text evidence="1">Belongs to the endoribonuclease YbeY family.</text>
</comment>